<feature type="chain" id="PRO_1000083754" description="2,3,4,5-tetrahydropyridine-2,6-dicarboxylate N-succinyltransferase">
    <location>
        <begin position="1"/>
        <end position="275"/>
    </location>
</feature>
<feature type="binding site" evidence="1">
    <location>
        <position position="107"/>
    </location>
    <ligand>
        <name>substrate</name>
    </ligand>
</feature>
<feature type="binding site" evidence="1">
    <location>
        <position position="144"/>
    </location>
    <ligand>
        <name>substrate</name>
    </ligand>
</feature>
<name>DAPD_POLAQ</name>
<reference key="1">
    <citation type="journal article" date="2012" name="Stand. Genomic Sci.">
        <title>Complete genome sequence of Polynucleobacter necessarius subsp. asymbioticus type strain (QLW-P1DMWA-1(T)).</title>
        <authorList>
            <person name="Meincke L."/>
            <person name="Copeland A."/>
            <person name="Lapidus A."/>
            <person name="Lucas S."/>
            <person name="Berry K.W."/>
            <person name="Del Rio T.G."/>
            <person name="Hammon N."/>
            <person name="Dalin E."/>
            <person name="Tice H."/>
            <person name="Pitluck S."/>
            <person name="Richardson P."/>
            <person name="Bruce D."/>
            <person name="Goodwin L."/>
            <person name="Han C."/>
            <person name="Tapia R."/>
            <person name="Detter J.C."/>
            <person name="Schmutz J."/>
            <person name="Brettin T."/>
            <person name="Larimer F."/>
            <person name="Land M."/>
            <person name="Hauser L."/>
            <person name="Kyrpides N.C."/>
            <person name="Ivanova N."/>
            <person name="Goker M."/>
            <person name="Woyke T."/>
            <person name="Wu Q.L."/>
            <person name="Pockl M."/>
            <person name="Hahn M.W."/>
            <person name="Klenk H.P."/>
        </authorList>
    </citation>
    <scope>NUCLEOTIDE SEQUENCE [LARGE SCALE GENOMIC DNA]</scope>
    <source>
        <strain>DSM 18221 / CIP 109841 / QLW-P1DMWA-1</strain>
    </source>
</reference>
<dbReference type="EC" id="2.3.1.117" evidence="1"/>
<dbReference type="EMBL" id="CP000655">
    <property type="protein sequence ID" value="ABP34672.1"/>
    <property type="molecule type" value="Genomic_DNA"/>
</dbReference>
<dbReference type="RefSeq" id="WP_011903295.1">
    <property type="nucleotide sequence ID" value="NC_009379.1"/>
</dbReference>
<dbReference type="SMR" id="A4SYV8"/>
<dbReference type="GeneID" id="31481848"/>
<dbReference type="KEGG" id="pnu:Pnuc_1458"/>
<dbReference type="eggNOG" id="COG2171">
    <property type="taxonomic scope" value="Bacteria"/>
</dbReference>
<dbReference type="HOGENOM" id="CLU_050859_0_1_4"/>
<dbReference type="UniPathway" id="UPA00034">
    <property type="reaction ID" value="UER00019"/>
</dbReference>
<dbReference type="Proteomes" id="UP000000231">
    <property type="component" value="Chromosome"/>
</dbReference>
<dbReference type="GO" id="GO:0005737">
    <property type="term" value="C:cytoplasm"/>
    <property type="evidence" value="ECO:0007669"/>
    <property type="project" value="UniProtKB-SubCell"/>
</dbReference>
<dbReference type="GO" id="GO:0008666">
    <property type="term" value="F:2,3,4,5-tetrahydropyridine-2,6-dicarboxylate N-succinyltransferase activity"/>
    <property type="evidence" value="ECO:0007669"/>
    <property type="project" value="UniProtKB-UniRule"/>
</dbReference>
<dbReference type="GO" id="GO:0016779">
    <property type="term" value="F:nucleotidyltransferase activity"/>
    <property type="evidence" value="ECO:0007669"/>
    <property type="project" value="TreeGrafter"/>
</dbReference>
<dbReference type="GO" id="GO:0019877">
    <property type="term" value="P:diaminopimelate biosynthetic process"/>
    <property type="evidence" value="ECO:0007669"/>
    <property type="project" value="UniProtKB-UniRule"/>
</dbReference>
<dbReference type="GO" id="GO:0009089">
    <property type="term" value="P:lysine biosynthetic process via diaminopimelate"/>
    <property type="evidence" value="ECO:0007669"/>
    <property type="project" value="UniProtKB-UniRule"/>
</dbReference>
<dbReference type="CDD" id="cd03350">
    <property type="entry name" value="LbH_THP_succinylT"/>
    <property type="match status" value="1"/>
</dbReference>
<dbReference type="Gene3D" id="2.160.10.10">
    <property type="entry name" value="Hexapeptide repeat proteins"/>
    <property type="match status" value="1"/>
</dbReference>
<dbReference type="Gene3D" id="1.10.166.10">
    <property type="entry name" value="Tetrahydrodipicolinate-N-succinyltransferase, N-terminal domain"/>
    <property type="match status" value="1"/>
</dbReference>
<dbReference type="HAMAP" id="MF_00811">
    <property type="entry name" value="DapD"/>
    <property type="match status" value="1"/>
</dbReference>
<dbReference type="InterPro" id="IPR005664">
    <property type="entry name" value="DapD_Trfase_Hexpep_rpt_fam"/>
</dbReference>
<dbReference type="InterPro" id="IPR001451">
    <property type="entry name" value="Hexapep"/>
</dbReference>
<dbReference type="InterPro" id="IPR018357">
    <property type="entry name" value="Hexapep_transf_CS"/>
</dbReference>
<dbReference type="InterPro" id="IPR023180">
    <property type="entry name" value="THP_succinylTrfase_dom1"/>
</dbReference>
<dbReference type="InterPro" id="IPR037133">
    <property type="entry name" value="THP_succinylTrfase_N_sf"/>
</dbReference>
<dbReference type="InterPro" id="IPR011004">
    <property type="entry name" value="Trimer_LpxA-like_sf"/>
</dbReference>
<dbReference type="NCBIfam" id="TIGR00965">
    <property type="entry name" value="dapD"/>
    <property type="match status" value="1"/>
</dbReference>
<dbReference type="NCBIfam" id="NF008808">
    <property type="entry name" value="PRK11830.1"/>
    <property type="match status" value="1"/>
</dbReference>
<dbReference type="PANTHER" id="PTHR19136:SF52">
    <property type="entry name" value="2,3,4,5-TETRAHYDROPYRIDINE-2,6-DICARBOXYLATE N-SUCCINYLTRANSFERASE"/>
    <property type="match status" value="1"/>
</dbReference>
<dbReference type="PANTHER" id="PTHR19136">
    <property type="entry name" value="MOLYBDENUM COFACTOR GUANYLYLTRANSFERASE"/>
    <property type="match status" value="1"/>
</dbReference>
<dbReference type="Pfam" id="PF14602">
    <property type="entry name" value="Hexapep_2"/>
    <property type="match status" value="1"/>
</dbReference>
<dbReference type="Pfam" id="PF14805">
    <property type="entry name" value="THDPS_N_2"/>
    <property type="match status" value="1"/>
</dbReference>
<dbReference type="SUPFAM" id="SSF51161">
    <property type="entry name" value="Trimeric LpxA-like enzymes"/>
    <property type="match status" value="1"/>
</dbReference>
<dbReference type="PROSITE" id="PS00101">
    <property type="entry name" value="HEXAPEP_TRANSFERASES"/>
    <property type="match status" value="1"/>
</dbReference>
<comment type="catalytic activity">
    <reaction evidence="1">
        <text>(S)-2,3,4,5-tetrahydrodipicolinate + succinyl-CoA + H2O = (S)-2-succinylamino-6-oxoheptanedioate + CoA</text>
        <dbReference type="Rhea" id="RHEA:17325"/>
        <dbReference type="ChEBI" id="CHEBI:15377"/>
        <dbReference type="ChEBI" id="CHEBI:15685"/>
        <dbReference type="ChEBI" id="CHEBI:16845"/>
        <dbReference type="ChEBI" id="CHEBI:57287"/>
        <dbReference type="ChEBI" id="CHEBI:57292"/>
        <dbReference type="EC" id="2.3.1.117"/>
    </reaction>
</comment>
<comment type="pathway">
    <text evidence="1">Amino-acid biosynthesis; L-lysine biosynthesis via DAP pathway; LL-2,6-diaminopimelate from (S)-tetrahydrodipicolinate (succinylase route): step 1/3.</text>
</comment>
<comment type="subunit">
    <text evidence="1">Homotrimer.</text>
</comment>
<comment type="subcellular location">
    <subcellularLocation>
        <location evidence="1">Cytoplasm</location>
    </subcellularLocation>
</comment>
<comment type="similarity">
    <text evidence="1">Belongs to the transferase hexapeptide repeat family.</text>
</comment>
<sequence>MSQSPQSIIEQAWENRANLSPESAPADIRSAVNAVLEGLNAGTIRVAERRDVGKWEVNQWVKKAVLLSFRLEDNKPMGAGGYTQFYDKVPSKFENYTAADFAAGGFRVVPPAVARRGSFIGKNAVLMPSYVNIGAYVGEGTMVDTWATVGSCAQIGKNVHLSGGVGIGGVLEPIQAGPVIIEDNCFIGARSEVVEGVVIEENAVLSMGVYIGQSTKIYDRETGEVHYGRVPAGSVVVPGSLPSACGKYSLYAAIIVKKVDAQTRAKTAINELLRD</sequence>
<protein>
    <recommendedName>
        <fullName evidence="1">2,3,4,5-tetrahydropyridine-2,6-dicarboxylate N-succinyltransferase</fullName>
        <ecNumber evidence="1">2.3.1.117</ecNumber>
    </recommendedName>
    <alternativeName>
        <fullName evidence="1">Tetrahydrodipicolinate N-succinyltransferase</fullName>
        <shortName evidence="1">THDP succinyltransferase</shortName>
        <shortName evidence="1">THP succinyltransferase</shortName>
        <shortName evidence="1">Tetrahydropicolinate succinylase</shortName>
    </alternativeName>
</protein>
<keyword id="KW-0012">Acyltransferase</keyword>
<keyword id="KW-0028">Amino-acid biosynthesis</keyword>
<keyword id="KW-0963">Cytoplasm</keyword>
<keyword id="KW-0220">Diaminopimelate biosynthesis</keyword>
<keyword id="KW-0457">Lysine biosynthesis</keyword>
<keyword id="KW-1185">Reference proteome</keyword>
<keyword id="KW-0677">Repeat</keyword>
<keyword id="KW-0808">Transferase</keyword>
<accession>A4SYV8</accession>
<proteinExistence type="inferred from homology"/>
<organism>
    <name type="scientific">Polynucleobacter asymbioticus (strain DSM 18221 / CIP 109841 / QLW-P1DMWA-1)</name>
    <name type="common">Polynucleobacter necessarius subsp. asymbioticus</name>
    <dbReference type="NCBI Taxonomy" id="312153"/>
    <lineage>
        <taxon>Bacteria</taxon>
        <taxon>Pseudomonadati</taxon>
        <taxon>Pseudomonadota</taxon>
        <taxon>Betaproteobacteria</taxon>
        <taxon>Burkholderiales</taxon>
        <taxon>Burkholderiaceae</taxon>
        <taxon>Polynucleobacter</taxon>
    </lineage>
</organism>
<evidence type="ECO:0000255" key="1">
    <source>
        <dbReference type="HAMAP-Rule" id="MF_00811"/>
    </source>
</evidence>
<gene>
    <name evidence="1" type="primary">dapD</name>
    <name type="ordered locus">Pnuc_1458</name>
</gene>